<reference key="1">
    <citation type="journal article" date="2005" name="DNA Res.">
        <title>The complete plastid genome sequence of the haptophyte Emiliania huxleyi: a comparison to other plastid genomes.</title>
        <authorList>
            <person name="Sanchez-Puerta M.V."/>
            <person name="Bachvaroff T.R."/>
            <person name="Delwiche C.F."/>
        </authorList>
    </citation>
    <scope>NUCLEOTIDE SEQUENCE [LARGE SCALE GENOMIC DNA]</scope>
    <source>
        <strain>CCMP373 / CSIRO-CS-57 / BT6</strain>
    </source>
</reference>
<accession>Q4G362</accession>
<organism>
    <name type="scientific">Emiliania huxleyi</name>
    <name type="common">Coccolithophore</name>
    <name type="synonym">Pontosphaera huxleyi</name>
    <dbReference type="NCBI Taxonomy" id="2903"/>
    <lineage>
        <taxon>Eukaryota</taxon>
        <taxon>Haptista</taxon>
        <taxon>Haptophyta</taxon>
        <taxon>Prymnesiophyceae</taxon>
        <taxon>Isochrysidales</taxon>
        <taxon>Noelaerhabdaceae</taxon>
        <taxon>Emiliania</taxon>
    </lineage>
</organism>
<geneLocation type="chloroplast"/>
<dbReference type="EMBL" id="AY741371">
    <property type="protein sequence ID" value="AAX13904.1"/>
    <property type="molecule type" value="Genomic_DNA"/>
</dbReference>
<dbReference type="RefSeq" id="YP_277405.1">
    <property type="nucleotide sequence ID" value="NC_007288.1"/>
</dbReference>
<dbReference type="SMR" id="Q4G362"/>
<dbReference type="STRING" id="2903.Q4G362"/>
<dbReference type="GeneID" id="3562489"/>
<dbReference type="GO" id="GO:0009507">
    <property type="term" value="C:chloroplast"/>
    <property type="evidence" value="ECO:0007669"/>
    <property type="project" value="UniProtKB-SubCell"/>
</dbReference>
<dbReference type="GO" id="GO:0005762">
    <property type="term" value="C:mitochondrial large ribosomal subunit"/>
    <property type="evidence" value="ECO:0007669"/>
    <property type="project" value="TreeGrafter"/>
</dbReference>
<dbReference type="GO" id="GO:0019843">
    <property type="term" value="F:rRNA binding"/>
    <property type="evidence" value="ECO:0007669"/>
    <property type="project" value="UniProtKB-UniRule"/>
</dbReference>
<dbReference type="GO" id="GO:0003735">
    <property type="term" value="F:structural constituent of ribosome"/>
    <property type="evidence" value="ECO:0007669"/>
    <property type="project" value="InterPro"/>
</dbReference>
<dbReference type="GO" id="GO:0016740">
    <property type="term" value="F:transferase activity"/>
    <property type="evidence" value="ECO:0007669"/>
    <property type="project" value="InterPro"/>
</dbReference>
<dbReference type="GO" id="GO:0032543">
    <property type="term" value="P:mitochondrial translation"/>
    <property type="evidence" value="ECO:0007669"/>
    <property type="project" value="TreeGrafter"/>
</dbReference>
<dbReference type="FunFam" id="2.30.30.30:FF:000001">
    <property type="entry name" value="50S ribosomal protein L2"/>
    <property type="match status" value="1"/>
</dbReference>
<dbReference type="FunFam" id="4.10.950.10:FF:000001">
    <property type="entry name" value="50S ribosomal protein L2"/>
    <property type="match status" value="1"/>
</dbReference>
<dbReference type="Gene3D" id="2.30.30.30">
    <property type="match status" value="1"/>
</dbReference>
<dbReference type="Gene3D" id="2.40.50.140">
    <property type="entry name" value="Nucleic acid-binding proteins"/>
    <property type="match status" value="1"/>
</dbReference>
<dbReference type="Gene3D" id="4.10.950.10">
    <property type="entry name" value="Ribosomal protein L2, domain 3"/>
    <property type="match status" value="1"/>
</dbReference>
<dbReference type="HAMAP" id="MF_01320_B">
    <property type="entry name" value="Ribosomal_uL2_B"/>
    <property type="match status" value="1"/>
</dbReference>
<dbReference type="InterPro" id="IPR012340">
    <property type="entry name" value="NA-bd_OB-fold"/>
</dbReference>
<dbReference type="InterPro" id="IPR014722">
    <property type="entry name" value="Rib_uL2_dom2"/>
</dbReference>
<dbReference type="InterPro" id="IPR002171">
    <property type="entry name" value="Ribosomal_uL2"/>
</dbReference>
<dbReference type="InterPro" id="IPR005880">
    <property type="entry name" value="Ribosomal_uL2_bac/org-type"/>
</dbReference>
<dbReference type="InterPro" id="IPR022669">
    <property type="entry name" value="Ribosomal_uL2_C"/>
</dbReference>
<dbReference type="InterPro" id="IPR022671">
    <property type="entry name" value="Ribosomal_uL2_CS"/>
</dbReference>
<dbReference type="InterPro" id="IPR014726">
    <property type="entry name" value="Ribosomal_uL2_dom3"/>
</dbReference>
<dbReference type="InterPro" id="IPR022666">
    <property type="entry name" value="Ribosomal_uL2_RNA-bd_dom"/>
</dbReference>
<dbReference type="InterPro" id="IPR008991">
    <property type="entry name" value="Translation_prot_SH3-like_sf"/>
</dbReference>
<dbReference type="NCBIfam" id="TIGR01171">
    <property type="entry name" value="rplB_bact"/>
    <property type="match status" value="1"/>
</dbReference>
<dbReference type="PANTHER" id="PTHR13691:SF5">
    <property type="entry name" value="LARGE RIBOSOMAL SUBUNIT PROTEIN UL2M"/>
    <property type="match status" value="1"/>
</dbReference>
<dbReference type="PANTHER" id="PTHR13691">
    <property type="entry name" value="RIBOSOMAL PROTEIN L2"/>
    <property type="match status" value="1"/>
</dbReference>
<dbReference type="Pfam" id="PF00181">
    <property type="entry name" value="Ribosomal_L2"/>
    <property type="match status" value="1"/>
</dbReference>
<dbReference type="Pfam" id="PF03947">
    <property type="entry name" value="Ribosomal_L2_C"/>
    <property type="match status" value="1"/>
</dbReference>
<dbReference type="PIRSF" id="PIRSF002158">
    <property type="entry name" value="Ribosomal_L2"/>
    <property type="match status" value="1"/>
</dbReference>
<dbReference type="SMART" id="SM01383">
    <property type="entry name" value="Ribosomal_L2"/>
    <property type="match status" value="1"/>
</dbReference>
<dbReference type="SMART" id="SM01382">
    <property type="entry name" value="Ribosomal_L2_C"/>
    <property type="match status" value="1"/>
</dbReference>
<dbReference type="SUPFAM" id="SSF50249">
    <property type="entry name" value="Nucleic acid-binding proteins"/>
    <property type="match status" value="1"/>
</dbReference>
<dbReference type="SUPFAM" id="SSF50104">
    <property type="entry name" value="Translation proteins SH3-like domain"/>
    <property type="match status" value="1"/>
</dbReference>
<dbReference type="PROSITE" id="PS00467">
    <property type="entry name" value="RIBOSOMAL_L2"/>
    <property type="match status" value="1"/>
</dbReference>
<proteinExistence type="inferred from homology"/>
<gene>
    <name type="primary">rpl2</name>
</gene>
<sequence>MAIRLYRAYSPGTRSRSSVYYTDITQQKPEKSLVFGKKACSGRNNRGIITLKGRGGAHKRKHRIIDFKRKSIATTARVATIEYDPNRNARIALLHYENGLKRYILAPRSLKVGMEVCSGPEAPIEIGNSLPLAAIPLGSTVHNIELTLGKGGQIARSAGTYAQIIAKEGDFVTLKLPSNEVRLVYKECYATLGQVGNIDAINTCLGKAGRSRWLGKRPKVRGVVKNPIDHPHGGGEGRSPIGRAKPVTPWGQPALGIKTRKKTKASGRYILRGRTK</sequence>
<evidence type="ECO:0000250" key="1"/>
<evidence type="ECO:0000255" key="2">
    <source>
        <dbReference type="HAMAP-Rule" id="MF_01320"/>
    </source>
</evidence>
<evidence type="ECO:0000256" key="3">
    <source>
        <dbReference type="SAM" id="MobiDB-lite"/>
    </source>
</evidence>
<evidence type="ECO:0000305" key="4"/>
<keyword id="KW-0150">Chloroplast</keyword>
<keyword id="KW-0934">Plastid</keyword>
<keyword id="KW-0687">Ribonucleoprotein</keyword>
<keyword id="KW-0689">Ribosomal protein</keyword>
<name>RK2_EMIHU</name>
<feature type="chain" id="PRO_0000237274" description="Large ribosomal subunit protein uL2c">
    <location>
        <begin position="1"/>
        <end position="276"/>
    </location>
</feature>
<feature type="region of interest" description="Disordered" evidence="3">
    <location>
        <begin position="223"/>
        <end position="254"/>
    </location>
</feature>
<comment type="subunit">
    <text evidence="1">Part of the 50S ribosomal subunit.</text>
</comment>
<comment type="subcellular location">
    <subcellularLocation>
        <location>Plastid</location>
        <location>Chloroplast</location>
    </subcellularLocation>
</comment>
<comment type="similarity">
    <text evidence="4">Belongs to the universal ribosomal protein uL2 family.</text>
</comment>
<protein>
    <recommendedName>
        <fullName evidence="2">Large ribosomal subunit protein uL2c</fullName>
    </recommendedName>
    <alternativeName>
        <fullName evidence="4">50S ribosomal protein L2, chloroplastic</fullName>
    </alternativeName>
</protein>